<feature type="chain" id="PRO_0000457536" description="Protein OPG146">
    <location>
        <begin position="1"/>
        <end position="77"/>
    </location>
</feature>
<feature type="region of interest" description="Disordered" evidence="2">
    <location>
        <begin position="1"/>
        <end position="20"/>
    </location>
</feature>
<reference key="1">
    <citation type="journal article" date="2013" name="Am. J. Trop. Med. Hyg.">
        <title>Detection of human monkeypox in the republic of the congo following intensive community education.</title>
        <authorList>
            <person name="Reynolds M.G."/>
            <person name="Emerson G.L."/>
            <person name="Pukuta E."/>
            <person name="Karhemere S."/>
            <person name="Muyembe J.J."/>
            <person name="Bikindou A."/>
            <person name="McCollum A.M."/>
            <person name="Moses C."/>
            <person name="Wilkins K."/>
            <person name="Zhao H."/>
            <person name="Damon I.K."/>
            <person name="Karem K.L."/>
            <person name="Li Y."/>
            <person name="Carroll D.S."/>
            <person name="Mombouli J.V."/>
        </authorList>
    </citation>
    <scope>NUCLEOTIDE SEQUENCE [GENOMIC DNA]</scope>
    <source>
        <strain>ROC2010</strain>
    </source>
</reference>
<reference key="2">
    <citation type="journal article" date="2022" name="J. Infect. Dis.">
        <title>Exportation of Monkeypox virus from the African continent.</title>
        <authorList>
            <person name="Mauldin M.R."/>
            <person name="McCollum A.M."/>
            <person name="Nakazawa Y.J."/>
            <person name="Mandra A."/>
            <person name="Whitehouse E.R."/>
            <person name="Davidson W."/>
            <person name="Zhao H."/>
            <person name="Gao J."/>
            <person name="Li Y."/>
            <person name="Doty J."/>
            <person name="Yinka-Ogunleye A."/>
            <person name="Akinpelu A."/>
            <person name="Aruna O."/>
            <person name="Naidoo D."/>
            <person name="Lewandowski K."/>
            <person name="Afrough B."/>
            <person name="Graham V."/>
            <person name="Aarons E."/>
            <person name="Hewson R."/>
            <person name="Vipond R."/>
            <person name="Dunning J."/>
            <person name="Chand M."/>
            <person name="Brown C."/>
            <person name="Cohen-Gihon I."/>
            <person name="Erez N."/>
            <person name="Shifman O."/>
            <person name="Israeli O."/>
            <person name="Sharon M."/>
            <person name="Schwartz E."/>
            <person name="Beth-Din A."/>
            <person name="Zvi A."/>
            <person name="Mak T.M."/>
            <person name="Ng Y.K."/>
            <person name="Cui L."/>
            <person name="Lin R.T.P."/>
            <person name="Olson V.A."/>
            <person name="Brooks T."/>
            <person name="Paran N."/>
            <person name="Ihekweazu C."/>
            <person name="Reynolds M.G."/>
        </authorList>
    </citation>
    <scope>NUCLEOTIDE SEQUENCE [LARGE SCALE GENOMIC DNA]</scope>
    <source>
        <strain>MPXV-M5312_HM12_Rivers</strain>
    </source>
</reference>
<sequence>MDSTNMRSGMKSRKKKPKTTVIDDDDDCMTCSACQSKLVKISDITKVSLDYINTMRGNTLACSACGSSLKLLNDFAS</sequence>
<gene>
    <name type="primary">OPG146</name>
    <name type="ORF">MPXVgp130</name>
</gene>
<protein>
    <recommendedName>
        <fullName>Protein OPG146</fullName>
    </recommendedName>
</protein>
<proteinExistence type="inferred from homology"/>
<accession>A0A7H0DNB8</accession>
<organismHost>
    <name type="scientific">Cynomys gunnisoni</name>
    <name type="common">Gunnison's prairie dog</name>
    <name type="synonym">Spermophilus gunnisoni</name>
    <dbReference type="NCBI Taxonomy" id="45479"/>
</organismHost>
<organismHost>
    <name type="scientific">Cynomys leucurus</name>
    <name type="common">White-tailed prairie dog</name>
    <dbReference type="NCBI Taxonomy" id="99825"/>
</organismHost>
<organismHost>
    <name type="scientific">Cynomys ludovicianus</name>
    <name type="common">Black-tailed prairie dog</name>
    <dbReference type="NCBI Taxonomy" id="45480"/>
</organismHost>
<organismHost>
    <name type="scientific">Cynomys mexicanus</name>
    <name type="common">Mexican prairie dog</name>
    <dbReference type="NCBI Taxonomy" id="99826"/>
</organismHost>
<organismHost>
    <name type="scientific">Cynomys parvidens</name>
    <name type="common">Utah prairie dog</name>
    <dbReference type="NCBI Taxonomy" id="99827"/>
</organismHost>
<organismHost>
    <name type="scientific">Gliridae</name>
    <name type="common">dormice</name>
    <dbReference type="NCBI Taxonomy" id="30650"/>
</organismHost>
<organismHost>
    <name type="scientific">Heliosciurus ruwenzorii</name>
    <name type="common">Ruwenzori sun squirrel</name>
    <dbReference type="NCBI Taxonomy" id="226685"/>
</organismHost>
<organismHost>
    <name type="scientific">Homo sapiens</name>
    <name type="common">Human</name>
    <dbReference type="NCBI Taxonomy" id="9606"/>
</organismHost>
<organismHost>
    <name type="scientific">Mus musculus</name>
    <name type="common">Mouse</name>
    <dbReference type="NCBI Taxonomy" id="10090"/>
</organismHost>
<evidence type="ECO:0000250" key="1">
    <source>
        <dbReference type="UniProtKB" id="P68714"/>
    </source>
</evidence>
<evidence type="ECO:0000256" key="2">
    <source>
        <dbReference type="SAM" id="MobiDB-lite"/>
    </source>
</evidence>
<evidence type="ECO:0000305" key="3"/>
<name>PG146_MONPV</name>
<comment type="function">
    <text evidence="1">Plays a role in the maturation of immature virions to infectious particles. May also participate in viral transcription.</text>
</comment>
<comment type="subunit">
    <text evidence="1">Interacts with capping enzyme RAP94/OPG109, the two large RNA polymerase subunits RPO147/OPG105 and RPO132/OPG151, the two early transcription factor subunits OPG185 and OPG133, one of the capping enzyme subunits OPG113, the nucleoside triphosphate phosphohydrolase OPG123, two core proteins OPG129 and OPG138, and a virion protein OPG064.</text>
</comment>
<comment type="subcellular location">
    <subcellularLocation>
        <location evidence="1">Virion</location>
    </subcellularLocation>
    <subcellularLocation>
        <location evidence="1">Host cytoplasm</location>
    </subcellularLocation>
    <subcellularLocation>
        <location evidence="1">Host nucleus</location>
    </subcellularLocation>
</comment>
<comment type="similarity">
    <text evidence="3">Belongs to the orthopoxvirus OPG146 family.</text>
</comment>
<organism>
    <name type="scientific">Monkeypox virus</name>
    <dbReference type="NCBI Taxonomy" id="10244"/>
    <lineage>
        <taxon>Viruses</taxon>
        <taxon>Varidnaviria</taxon>
        <taxon>Bamfordvirae</taxon>
        <taxon>Nucleocytoviricota</taxon>
        <taxon>Pokkesviricetes</taxon>
        <taxon>Chitovirales</taxon>
        <taxon>Poxviridae</taxon>
        <taxon>Chordopoxvirinae</taxon>
        <taxon>Orthopoxvirus</taxon>
    </lineage>
</organism>
<keyword id="KW-1035">Host cytoplasm</keyword>
<keyword id="KW-1048">Host nucleus</keyword>
<keyword id="KW-0597">Phosphoprotein</keyword>
<keyword id="KW-1185">Reference proteome</keyword>
<keyword id="KW-0946">Virion</keyword>
<dbReference type="EMBL" id="KC257461">
    <property type="protein sequence ID" value="AGF37035.1"/>
    <property type="molecule type" value="Genomic_DNA"/>
</dbReference>
<dbReference type="EMBL" id="MT903340">
    <property type="protein sequence ID" value="QNP13001.1"/>
    <property type="molecule type" value="Genomic_DNA"/>
</dbReference>
<dbReference type="RefSeq" id="YP_010377128.1">
    <property type="nucleotide sequence ID" value="NC_063383.1"/>
</dbReference>
<dbReference type="GeneID" id="72551541"/>
<dbReference type="Proteomes" id="UP000516359">
    <property type="component" value="Genome"/>
</dbReference>
<dbReference type="GO" id="GO:0030430">
    <property type="term" value="C:host cell cytoplasm"/>
    <property type="evidence" value="ECO:0007669"/>
    <property type="project" value="UniProtKB-SubCell"/>
</dbReference>
<dbReference type="GO" id="GO:0042025">
    <property type="term" value="C:host cell nucleus"/>
    <property type="evidence" value="ECO:0007669"/>
    <property type="project" value="UniProtKB-SubCell"/>
</dbReference>
<dbReference type="GO" id="GO:0044423">
    <property type="term" value="C:virion component"/>
    <property type="evidence" value="ECO:0007669"/>
    <property type="project" value="UniProtKB-KW"/>
</dbReference>
<dbReference type="InterPro" id="IPR007769">
    <property type="entry name" value="Poxvirus_A19"/>
</dbReference>
<dbReference type="Pfam" id="PF05077">
    <property type="entry name" value="DUF678"/>
    <property type="match status" value="1"/>
</dbReference>